<keyword id="KW-0378">Hydrolase</keyword>
<keyword id="KW-0546">Nucleotide metabolism</keyword>
<keyword id="KW-0547">Nucleotide-binding</keyword>
<keyword id="KW-1185">Reference proteome</keyword>
<dbReference type="EC" id="3.5.4.13" evidence="1"/>
<dbReference type="EMBL" id="CP001063">
    <property type="protein sequence ID" value="ACD09666.1"/>
    <property type="molecule type" value="Genomic_DNA"/>
</dbReference>
<dbReference type="RefSeq" id="WP_001234767.1">
    <property type="nucleotide sequence ID" value="NC_010658.1"/>
</dbReference>
<dbReference type="SMR" id="B2TYB7"/>
<dbReference type="STRING" id="344609.SbBS512_E1167"/>
<dbReference type="GeneID" id="93775126"/>
<dbReference type="KEGG" id="sbc:SbBS512_E1167"/>
<dbReference type="HOGENOM" id="CLU_087476_2_0_6"/>
<dbReference type="UniPathway" id="UPA00610">
    <property type="reaction ID" value="UER00665"/>
</dbReference>
<dbReference type="Proteomes" id="UP000001030">
    <property type="component" value="Chromosome"/>
</dbReference>
<dbReference type="GO" id="GO:0008829">
    <property type="term" value="F:dCTP deaminase activity"/>
    <property type="evidence" value="ECO:0007669"/>
    <property type="project" value="UniProtKB-UniRule"/>
</dbReference>
<dbReference type="GO" id="GO:0000166">
    <property type="term" value="F:nucleotide binding"/>
    <property type="evidence" value="ECO:0007669"/>
    <property type="project" value="UniProtKB-KW"/>
</dbReference>
<dbReference type="GO" id="GO:0006226">
    <property type="term" value="P:dUMP biosynthetic process"/>
    <property type="evidence" value="ECO:0007669"/>
    <property type="project" value="UniProtKB-UniPathway"/>
</dbReference>
<dbReference type="GO" id="GO:0006229">
    <property type="term" value="P:dUTP biosynthetic process"/>
    <property type="evidence" value="ECO:0007669"/>
    <property type="project" value="UniProtKB-UniRule"/>
</dbReference>
<dbReference type="GO" id="GO:0015949">
    <property type="term" value="P:nucleobase-containing small molecule interconversion"/>
    <property type="evidence" value="ECO:0007669"/>
    <property type="project" value="TreeGrafter"/>
</dbReference>
<dbReference type="CDD" id="cd07557">
    <property type="entry name" value="trimeric_dUTPase"/>
    <property type="match status" value="1"/>
</dbReference>
<dbReference type="FunFam" id="2.70.40.10:FF:000003">
    <property type="entry name" value="dCTP deaminase"/>
    <property type="match status" value="1"/>
</dbReference>
<dbReference type="Gene3D" id="2.70.40.10">
    <property type="match status" value="1"/>
</dbReference>
<dbReference type="HAMAP" id="MF_00146">
    <property type="entry name" value="dCTP_deaminase"/>
    <property type="match status" value="1"/>
</dbReference>
<dbReference type="InterPro" id="IPR011962">
    <property type="entry name" value="dCTP_deaminase"/>
</dbReference>
<dbReference type="InterPro" id="IPR036157">
    <property type="entry name" value="dUTPase-like_sf"/>
</dbReference>
<dbReference type="InterPro" id="IPR033704">
    <property type="entry name" value="dUTPase_trimeric"/>
</dbReference>
<dbReference type="NCBIfam" id="TIGR02274">
    <property type="entry name" value="dCTP_deam"/>
    <property type="match status" value="1"/>
</dbReference>
<dbReference type="PANTHER" id="PTHR42680">
    <property type="entry name" value="DCTP DEAMINASE"/>
    <property type="match status" value="1"/>
</dbReference>
<dbReference type="PANTHER" id="PTHR42680:SF3">
    <property type="entry name" value="DCTP DEAMINASE"/>
    <property type="match status" value="1"/>
</dbReference>
<dbReference type="Pfam" id="PF22769">
    <property type="entry name" value="DCD"/>
    <property type="match status" value="1"/>
</dbReference>
<dbReference type="SUPFAM" id="SSF51283">
    <property type="entry name" value="dUTPase-like"/>
    <property type="match status" value="1"/>
</dbReference>
<reference key="1">
    <citation type="submission" date="2008-05" db="EMBL/GenBank/DDBJ databases">
        <title>Complete sequence of Shigella boydii serotype 18 strain BS512.</title>
        <authorList>
            <person name="Rasko D.A."/>
            <person name="Rosovitz M."/>
            <person name="Maurelli A.T."/>
            <person name="Myers G."/>
            <person name="Seshadri R."/>
            <person name="Cer R."/>
            <person name="Jiang L."/>
            <person name="Ravel J."/>
            <person name="Sebastian Y."/>
        </authorList>
    </citation>
    <scope>NUCLEOTIDE SEQUENCE [LARGE SCALE GENOMIC DNA]</scope>
    <source>
        <strain>CDC 3083-94 / BS512</strain>
    </source>
</reference>
<sequence>MRLCDRDIEAWLDEGRLSINPRPPVERINGATVDVRLGNKFRTFRGHTAAFIDLSGPKDEVSAALDRVMSDEIVLDEGEAFYLHPGELALAVTLESVTLPADLVGWLDGRSSLARLGLMVHVTAHRIDPGWSGCIVLEFYNSGKLPLALRPGMLIGALSFEPLSGPAARPYNRREDAKYRNQQGAVASRIDKD</sequence>
<accession>B2TYB7</accession>
<organism>
    <name type="scientific">Shigella boydii serotype 18 (strain CDC 3083-94 / BS512)</name>
    <dbReference type="NCBI Taxonomy" id="344609"/>
    <lineage>
        <taxon>Bacteria</taxon>
        <taxon>Pseudomonadati</taxon>
        <taxon>Pseudomonadota</taxon>
        <taxon>Gammaproteobacteria</taxon>
        <taxon>Enterobacterales</taxon>
        <taxon>Enterobacteriaceae</taxon>
        <taxon>Shigella</taxon>
    </lineage>
</organism>
<feature type="chain" id="PRO_1000096454" description="dCTP deaminase">
    <location>
        <begin position="1"/>
        <end position="193"/>
    </location>
</feature>
<feature type="region of interest" description="Disordered" evidence="2">
    <location>
        <begin position="169"/>
        <end position="193"/>
    </location>
</feature>
<feature type="active site" description="Proton donor/acceptor" evidence="1">
    <location>
        <position position="138"/>
    </location>
</feature>
<feature type="binding site" evidence="1">
    <location>
        <begin position="110"/>
        <end position="115"/>
    </location>
    <ligand>
        <name>dCTP</name>
        <dbReference type="ChEBI" id="CHEBI:61481"/>
    </ligand>
</feature>
<feature type="binding site" evidence="1">
    <location>
        <position position="128"/>
    </location>
    <ligand>
        <name>dCTP</name>
        <dbReference type="ChEBI" id="CHEBI:61481"/>
    </ligand>
</feature>
<feature type="binding site" evidence="1">
    <location>
        <begin position="136"/>
        <end position="138"/>
    </location>
    <ligand>
        <name>dCTP</name>
        <dbReference type="ChEBI" id="CHEBI:61481"/>
    </ligand>
</feature>
<feature type="binding site" evidence="1">
    <location>
        <position position="171"/>
    </location>
    <ligand>
        <name>dCTP</name>
        <dbReference type="ChEBI" id="CHEBI:61481"/>
    </ligand>
</feature>
<feature type="binding site" evidence="1">
    <location>
        <position position="178"/>
    </location>
    <ligand>
        <name>dCTP</name>
        <dbReference type="ChEBI" id="CHEBI:61481"/>
    </ligand>
</feature>
<feature type="binding site" evidence="1">
    <location>
        <position position="182"/>
    </location>
    <ligand>
        <name>dCTP</name>
        <dbReference type="ChEBI" id="CHEBI:61481"/>
    </ligand>
</feature>
<gene>
    <name evidence="1" type="primary">dcd</name>
    <name type="ordered locus">SbBS512_E1167</name>
</gene>
<comment type="function">
    <text evidence="1">Catalyzes the deamination of dCTP to dUTP.</text>
</comment>
<comment type="catalytic activity">
    <reaction evidence="1">
        <text>dCTP + H2O + H(+) = dUTP + NH4(+)</text>
        <dbReference type="Rhea" id="RHEA:22680"/>
        <dbReference type="ChEBI" id="CHEBI:15377"/>
        <dbReference type="ChEBI" id="CHEBI:15378"/>
        <dbReference type="ChEBI" id="CHEBI:28938"/>
        <dbReference type="ChEBI" id="CHEBI:61481"/>
        <dbReference type="ChEBI" id="CHEBI:61555"/>
        <dbReference type="EC" id="3.5.4.13"/>
    </reaction>
</comment>
<comment type="pathway">
    <text evidence="1">Pyrimidine metabolism; dUMP biosynthesis; dUMP from dCTP (dUTP route): step 1/2.</text>
</comment>
<comment type="subunit">
    <text evidence="1">Homotrimer.</text>
</comment>
<comment type="similarity">
    <text evidence="1">Belongs to the dCTP deaminase family.</text>
</comment>
<protein>
    <recommendedName>
        <fullName evidence="1">dCTP deaminase</fullName>
        <ecNumber evidence="1">3.5.4.13</ecNumber>
    </recommendedName>
    <alternativeName>
        <fullName evidence="1">Deoxycytidine triphosphate deaminase</fullName>
    </alternativeName>
</protein>
<proteinExistence type="inferred from homology"/>
<evidence type="ECO:0000255" key="1">
    <source>
        <dbReference type="HAMAP-Rule" id="MF_00146"/>
    </source>
</evidence>
<evidence type="ECO:0000256" key="2">
    <source>
        <dbReference type="SAM" id="MobiDB-lite"/>
    </source>
</evidence>
<name>DCD_SHIB3</name>